<sequence>MIKNRFILILVIVALTVSLLSFLLAFCTDWLFFVETGFTSVFTTKLYAQAGSGLLFAGVLFAGTLLNLLLAGKAVFPTYATPREAGDFRPRLDEARRLVKPLGIPACAILALLVGQWGAMQWEKLLFFVNRVSVGTTDPVMGRDIGFYLFTLPLMETITAFAGFTLLTSLFLTVLVYTVRGGICLSERGVAIDGTVRRHLAILLLLLSCVIAAGFHLDCFRLLFSSNGIFHGAGYTDVHSRLPTYRILTILAPLAGTALAIGLWKGAWRMALLAPLAVIVLHVIGIRVYPGLLQKFKVAPNELALEAPYIRNNIALTRLGFDLDKIETIPFDVDTQLSSADIARNDATIKNIRLWDHAPLLKTYSQLQQIRTYYRFFDVDNDRYLVNGRYSQVMLSPRELSYADLPSRNWINERLIFTHGNGITFGPVSRISKEGLPEFFVKDIPAVSLADIRVTRPEIYFGELSNEYVIVRTRVPEFSYPTSSGNINTTYAGTGGVPMDSLAKRMLFAARFRTEKILLSSDITSQSSIIFNRNINERVRAVAPFLHFDDDPYMVVDDRGRLKWIIDAYTFSDRLPCSKPIKGGVNYMRNSVKAVVDAYDGTLAFYISDPHDVLIRVYDRMFPGLFRPISAMPDDLRRHVRYPHHFLQLQAAMYTAYHMTDPKVFYNKENLWQVPALGEKPMEPYYTIMKLPGETAEEYILLLPFTPSKRDNLAAWLTARSDGANYGKIRAYTFPRDRLIYGPKQIDARINQDSFISQQLTLWNQRGSEVIRGSLLVIPIEKSLLYVQPLFLAADKAGLPELKRVIVAFGDQVVMEENLEQALQRLFGGKRAPEPASSATAKDSTTSPALLAKEAMAAYEKAISQQRQGNWSGYGEELRRLEQILRRMAQ</sequence>
<accession>A1ASH1</accession>
<keyword id="KW-1003">Cell membrane</keyword>
<keyword id="KW-0472">Membrane</keyword>
<keyword id="KW-1185">Reference proteome</keyword>
<keyword id="KW-0812">Transmembrane</keyword>
<keyword id="KW-1133">Transmembrane helix</keyword>
<dbReference type="EMBL" id="CP000482">
    <property type="protein sequence ID" value="ABL00292.1"/>
    <property type="molecule type" value="Genomic_DNA"/>
</dbReference>
<dbReference type="RefSeq" id="WP_011736543.1">
    <property type="nucleotide sequence ID" value="NC_008609.1"/>
</dbReference>
<dbReference type="SMR" id="A1ASH1"/>
<dbReference type="STRING" id="338966.Ppro_2689"/>
<dbReference type="KEGG" id="ppd:Ppro_2689"/>
<dbReference type="eggNOG" id="COG1615">
    <property type="taxonomic scope" value="Bacteria"/>
</dbReference>
<dbReference type="HOGENOM" id="CLU_007733_0_0_7"/>
<dbReference type="OrthoDB" id="9763654at2"/>
<dbReference type="Proteomes" id="UP000006732">
    <property type="component" value="Chromosome"/>
</dbReference>
<dbReference type="GO" id="GO:0005576">
    <property type="term" value="C:extracellular region"/>
    <property type="evidence" value="ECO:0007669"/>
    <property type="project" value="TreeGrafter"/>
</dbReference>
<dbReference type="GO" id="GO:0005886">
    <property type="term" value="C:plasma membrane"/>
    <property type="evidence" value="ECO:0007669"/>
    <property type="project" value="UniProtKB-SubCell"/>
</dbReference>
<dbReference type="HAMAP" id="MF_01600">
    <property type="entry name" value="UPF0182"/>
    <property type="match status" value="1"/>
</dbReference>
<dbReference type="InterPro" id="IPR005372">
    <property type="entry name" value="UPF0182"/>
</dbReference>
<dbReference type="PANTHER" id="PTHR39344">
    <property type="entry name" value="UPF0182 PROTEIN SLL1060"/>
    <property type="match status" value="1"/>
</dbReference>
<dbReference type="PANTHER" id="PTHR39344:SF1">
    <property type="entry name" value="UPF0182 PROTEIN SLL1060"/>
    <property type="match status" value="1"/>
</dbReference>
<dbReference type="Pfam" id="PF03699">
    <property type="entry name" value="UPF0182"/>
    <property type="match status" value="1"/>
</dbReference>
<feature type="chain" id="PRO_5000182123" description="UPF0182 protein Ppro_2689">
    <location>
        <begin position="1"/>
        <end position="890"/>
    </location>
</feature>
<feature type="transmembrane region" description="Helical" evidence="1">
    <location>
        <begin position="6"/>
        <end position="26"/>
    </location>
</feature>
<feature type="transmembrane region" description="Helical" evidence="1">
    <location>
        <begin position="50"/>
        <end position="70"/>
    </location>
</feature>
<feature type="transmembrane region" description="Helical" evidence="1">
    <location>
        <begin position="102"/>
        <end position="122"/>
    </location>
</feature>
<feature type="transmembrane region" description="Helical" evidence="1">
    <location>
        <begin position="157"/>
        <end position="177"/>
    </location>
</feature>
<feature type="transmembrane region" description="Helical" evidence="1">
    <location>
        <begin position="200"/>
        <end position="220"/>
    </location>
</feature>
<feature type="transmembrane region" description="Helical" evidence="1">
    <location>
        <begin position="244"/>
        <end position="264"/>
    </location>
</feature>
<feature type="transmembrane region" description="Helical" evidence="1">
    <location>
        <begin position="266"/>
        <end position="286"/>
    </location>
</feature>
<name>Y2689_PELPD</name>
<comment type="subcellular location">
    <subcellularLocation>
        <location evidence="1">Cell membrane</location>
        <topology evidence="1">Multi-pass membrane protein</topology>
    </subcellularLocation>
</comment>
<comment type="similarity">
    <text evidence="1">Belongs to the UPF0182 family.</text>
</comment>
<organism>
    <name type="scientific">Pelobacter propionicus (strain DSM 2379 / NBRC 103807 / OttBd1)</name>
    <dbReference type="NCBI Taxonomy" id="338966"/>
    <lineage>
        <taxon>Bacteria</taxon>
        <taxon>Pseudomonadati</taxon>
        <taxon>Thermodesulfobacteriota</taxon>
        <taxon>Desulfuromonadia</taxon>
        <taxon>Desulfuromonadales</taxon>
        <taxon>Desulfuromonadaceae</taxon>
        <taxon>Pelobacter</taxon>
    </lineage>
</organism>
<protein>
    <recommendedName>
        <fullName evidence="1">UPF0182 protein Ppro_2689</fullName>
    </recommendedName>
</protein>
<reference key="1">
    <citation type="submission" date="2006-10" db="EMBL/GenBank/DDBJ databases">
        <title>Complete sequence of chromosome of Pelobacter propionicus DSM 2379.</title>
        <authorList>
            <consortium name="US DOE Joint Genome Institute"/>
            <person name="Copeland A."/>
            <person name="Lucas S."/>
            <person name="Lapidus A."/>
            <person name="Barry K."/>
            <person name="Detter J.C."/>
            <person name="Glavina del Rio T."/>
            <person name="Hammon N."/>
            <person name="Israni S."/>
            <person name="Dalin E."/>
            <person name="Tice H."/>
            <person name="Pitluck S."/>
            <person name="Saunders E."/>
            <person name="Brettin T."/>
            <person name="Bruce D."/>
            <person name="Han C."/>
            <person name="Tapia R."/>
            <person name="Schmutz J."/>
            <person name="Larimer F."/>
            <person name="Land M."/>
            <person name="Hauser L."/>
            <person name="Kyrpides N."/>
            <person name="Kim E."/>
            <person name="Lovley D."/>
            <person name="Richardson P."/>
        </authorList>
    </citation>
    <scope>NUCLEOTIDE SEQUENCE [LARGE SCALE GENOMIC DNA]</scope>
    <source>
        <strain>DSM 2379 / NBRC 103807 / OttBd1</strain>
    </source>
</reference>
<proteinExistence type="inferred from homology"/>
<gene>
    <name type="ordered locus">Ppro_2689</name>
</gene>
<evidence type="ECO:0000255" key="1">
    <source>
        <dbReference type="HAMAP-Rule" id="MF_01600"/>
    </source>
</evidence>